<proteinExistence type="evidence at protein level"/>
<gene>
    <name evidence="8" type="primary">SR1IP1</name>
    <name evidence="12" type="ordered locus">At5g67385</name>
    <name evidence="11" type="ORF">K8K14</name>
</gene>
<sequence>MSAKKKDLLSSAMKRTSEWISSQEVSSDVTVHVGEASFSLHKFPLMSKCGFIKKLVSESSKDSDSTVIKIPDIPGGSEAFELAAKFCYGINFDMSTENIAMLRCAAEYLEMTEEHSVENLVVRAEAYLNEVALKSLSSSITVLHKSEKLLPIAERVKLVSRCIDAIAYMTCQESHFCSPSSSNSGNNEVVVQQQSKQPVVDWWAEDLTVLRIDSFQRVLIAMMARGFKQYGLGPVLMLYAQKSLRGLEIFGKGMKKIEPKQEHEKRVILETIVSLLPREKNAMSVSFLSMLLRAAIFLETTVACRLDLENRMGLQLGQAVLDDLLIPSYSFTGDHSMFDTDTVQRILMNYLEFEVEGVRLSNNGVDLAGDMERVGKLLENYMAEIASDRNVSLQKFIGLAELIPEQSRVTEDGMYRAVDIYLKAHPNMSDVERKKVCSLMDCQKLSREACAHAAQNDRLPVQTIVQVLYYEQQRLRGEVTNDSDSPAPPPPQPAAVLPPKLSSYTDELSKLKRENQDLKLELLKMKMKLKEFEKESEKKTSSSTISTNPSSPISTASTGKPPLPRKSFINSVSKKLGKLNPFSITPYNGRGRTKPPKDRRHSIS</sequence>
<name>SR1P1_ARATH</name>
<protein>
    <recommendedName>
        <fullName evidence="9">BTB/POZ domain-containing protein SR1IP1</fullName>
    </recommendedName>
    <alternativeName>
        <fullName evidence="8">Protein ATSR1-INTERACTION PROTEIN 1</fullName>
    </alternativeName>
</protein>
<keyword id="KW-0175">Coiled coil</keyword>
<keyword id="KW-0597">Phosphoprotein</keyword>
<keyword id="KW-0611">Plant defense</keyword>
<keyword id="KW-1185">Reference proteome</keyword>
<keyword id="KW-0833">Ubl conjugation pathway</keyword>
<comment type="function">
    <text evidence="7 10">Acts as a substrate-specific adapter of an E3 ubiquitin-protein ligase complex (CUL3-RBX1-BTB) which mediates the ubiquitination and subsequent proteasomal degradation of target proteins (Probable). Involved in disease resistance. Acts as a substrate adapter that recruits CAMTA3/SR1 for ubiquitination and degradation during pathogen infection. Acts as a positive regulator of plant defense by removing the defense suppressor CAMTA3/SR1 (PubMed:24528504).</text>
</comment>
<comment type="pathway">
    <text evidence="9">Protein modification; protein ubiquitination.</text>
</comment>
<comment type="subunit">
    <text evidence="7">Interacts with CAMTA3 and CUL3A.</text>
</comment>
<comment type="domain">
    <text evidence="6">The BTB/POZ domain mediates the interaction with some component of ubiquitin ligase complexes.</text>
</comment>
<comment type="disruption phenotype">
    <text evidence="7">No visible phenotype under normal growth conditions, but mutant plants exhibit enhanced susceptibility to the bacterial virulent pathogen Pseudomonas syringae pv tomato strain DC3000.</text>
</comment>
<comment type="similarity">
    <text evidence="4">Belongs to the NPH3 family.</text>
</comment>
<reference key="1">
    <citation type="journal article" date="1997" name="DNA Res.">
        <title>Structural analysis of Arabidopsis thaliana chromosome 5. III. Sequence features of the regions of 1,191,918 bp covered by seventeen physically assigned P1 clones.</title>
        <authorList>
            <person name="Nakamura Y."/>
            <person name="Sato S."/>
            <person name="Kaneko T."/>
            <person name="Kotani H."/>
            <person name="Asamizu E."/>
            <person name="Miyajima N."/>
            <person name="Tabata S."/>
        </authorList>
    </citation>
    <scope>NUCLEOTIDE SEQUENCE [LARGE SCALE GENOMIC DNA]</scope>
    <source>
        <strain>cv. Columbia</strain>
    </source>
</reference>
<reference key="2">
    <citation type="journal article" date="2017" name="Plant J.">
        <title>Araport11: a complete reannotation of the Arabidopsis thaliana reference genome.</title>
        <authorList>
            <person name="Cheng C.Y."/>
            <person name="Krishnakumar V."/>
            <person name="Chan A.P."/>
            <person name="Thibaud-Nissen F."/>
            <person name="Schobel S."/>
            <person name="Town C.D."/>
        </authorList>
    </citation>
    <scope>GENOME REANNOTATION</scope>
    <source>
        <strain>cv. Columbia</strain>
    </source>
</reference>
<reference key="3">
    <citation type="journal article" date="2003" name="Science">
        <title>Empirical analysis of transcriptional activity in the Arabidopsis genome.</title>
        <authorList>
            <person name="Yamada K."/>
            <person name="Lim J."/>
            <person name="Dale J.M."/>
            <person name="Chen H."/>
            <person name="Shinn P."/>
            <person name="Palm C.J."/>
            <person name="Southwick A.M."/>
            <person name="Wu H.C."/>
            <person name="Kim C.J."/>
            <person name="Nguyen M."/>
            <person name="Pham P.K."/>
            <person name="Cheuk R.F."/>
            <person name="Karlin-Newmann G."/>
            <person name="Liu S.X."/>
            <person name="Lam B."/>
            <person name="Sakano H."/>
            <person name="Wu T."/>
            <person name="Yu G."/>
            <person name="Miranda M."/>
            <person name="Quach H.L."/>
            <person name="Tripp M."/>
            <person name="Chang C.H."/>
            <person name="Lee J.M."/>
            <person name="Toriumi M.J."/>
            <person name="Chan M.M."/>
            <person name="Tang C.C."/>
            <person name="Onodera C.S."/>
            <person name="Deng J.M."/>
            <person name="Akiyama K."/>
            <person name="Ansari Y."/>
            <person name="Arakawa T."/>
            <person name="Banh J."/>
            <person name="Banno F."/>
            <person name="Bowser L."/>
            <person name="Brooks S.Y."/>
            <person name="Carninci P."/>
            <person name="Chao Q."/>
            <person name="Choy N."/>
            <person name="Enju A."/>
            <person name="Goldsmith A.D."/>
            <person name="Gurjal M."/>
            <person name="Hansen N.F."/>
            <person name="Hayashizaki Y."/>
            <person name="Johnson-Hopson C."/>
            <person name="Hsuan V.W."/>
            <person name="Iida K."/>
            <person name="Karnes M."/>
            <person name="Khan S."/>
            <person name="Koesema E."/>
            <person name="Ishida J."/>
            <person name="Jiang P.X."/>
            <person name="Jones T."/>
            <person name="Kawai J."/>
            <person name="Kamiya A."/>
            <person name="Meyers C."/>
            <person name="Nakajima M."/>
            <person name="Narusaka M."/>
            <person name="Seki M."/>
            <person name="Sakurai T."/>
            <person name="Satou M."/>
            <person name="Tamse R."/>
            <person name="Vaysberg M."/>
            <person name="Wallender E.K."/>
            <person name="Wong C."/>
            <person name="Yamamura Y."/>
            <person name="Yuan S."/>
            <person name="Shinozaki K."/>
            <person name="Davis R.W."/>
            <person name="Theologis A."/>
            <person name="Ecker J.R."/>
        </authorList>
    </citation>
    <scope>NUCLEOTIDE SEQUENCE [LARGE SCALE MRNA]</scope>
    <source>
        <strain>cv. Columbia</strain>
    </source>
</reference>
<reference key="4">
    <citation type="journal article" date="2004" name="Genome Res.">
        <title>Whole genome sequence comparisons and 'full-length' cDNA sequences: a combined approach to evaluate and improve Arabidopsis genome annotation.</title>
        <authorList>
            <person name="Castelli V."/>
            <person name="Aury J.-M."/>
            <person name="Jaillon O."/>
            <person name="Wincker P."/>
            <person name="Clepet C."/>
            <person name="Menard M."/>
            <person name="Cruaud C."/>
            <person name="Quetier F."/>
            <person name="Scarpelli C."/>
            <person name="Schaechter V."/>
            <person name="Temple G."/>
            <person name="Caboche M."/>
            <person name="Weissenbach J."/>
            <person name="Salanoubat M."/>
        </authorList>
    </citation>
    <scope>NUCLEOTIDE SEQUENCE [LARGE SCALE MRNA]</scope>
    <source>
        <strain>cv. Columbia</strain>
    </source>
</reference>
<reference key="5">
    <citation type="journal article" date="2005" name="J. Biol. Chem.">
        <title>Cullins 3a and 3b assemble with members of the broad complex/tramtrack/bric-a-brac (BTB) protein family to form essential ubiquitin-protein ligases (E3s) in Arabidopsis.</title>
        <authorList>
            <person name="Gingerich D.J."/>
            <person name="Gagne J.M."/>
            <person name="Salter D.W."/>
            <person name="Hellmann H."/>
            <person name="Estelle M."/>
            <person name="Ma L."/>
            <person name="Vierstra R.D."/>
        </authorList>
    </citation>
    <scope>DOMAIN BTB</scope>
</reference>
<reference key="6">
    <citation type="journal article" date="2009" name="Plant Physiol.">
        <title>Large-scale Arabidopsis phosphoproteome profiling reveals novel chloroplast kinase substrates and phosphorylation networks.</title>
        <authorList>
            <person name="Reiland S."/>
            <person name="Messerli G."/>
            <person name="Baerenfaller K."/>
            <person name="Gerrits B."/>
            <person name="Endler A."/>
            <person name="Grossmann J."/>
            <person name="Gruissem W."/>
            <person name="Baginsky S."/>
        </authorList>
    </citation>
    <scope>IDENTIFICATION BY MASS SPECTROMETRY [LARGE SCALE ANALYSIS]</scope>
</reference>
<reference key="7">
    <citation type="journal article" date="2014" name="Plant J.">
        <title>Regulation of plant immunity through ubiquitin-mediated modulation of Ca(2+) -calmodulin-AtSR1/CAMTA3 signaling.</title>
        <authorList>
            <person name="Zhang L."/>
            <person name="Du L."/>
            <person name="Shen C."/>
            <person name="Yang Y."/>
            <person name="Poovaiah B.W."/>
        </authorList>
    </citation>
    <scope>FUNCTION</scope>
    <scope>INTERACTION WITH CAMTA3 AND CUL3A</scope>
    <scope>DISRUPTION PHENOTYPE</scope>
</reference>
<dbReference type="EMBL" id="AB007645">
    <property type="status" value="NOT_ANNOTATED_CDS"/>
    <property type="molecule type" value="Genomic_DNA"/>
</dbReference>
<dbReference type="EMBL" id="CP002688">
    <property type="protein sequence ID" value="AED98336.1"/>
    <property type="molecule type" value="Genomic_DNA"/>
</dbReference>
<dbReference type="EMBL" id="BT015362">
    <property type="protein sequence ID" value="AAU05485.1"/>
    <property type="molecule type" value="mRNA"/>
</dbReference>
<dbReference type="EMBL" id="BT015895">
    <property type="protein sequence ID" value="AAU95431.1"/>
    <property type="molecule type" value="mRNA"/>
</dbReference>
<dbReference type="EMBL" id="BX829802">
    <property type="status" value="NOT_ANNOTATED_CDS"/>
    <property type="molecule type" value="mRNA"/>
</dbReference>
<dbReference type="RefSeq" id="NP_680473.2">
    <property type="nucleotide sequence ID" value="NM_148168.4"/>
</dbReference>
<dbReference type="SMR" id="Q66GP0"/>
<dbReference type="BioGRID" id="22116">
    <property type="interactions" value="4"/>
</dbReference>
<dbReference type="FunCoup" id="Q66GP0">
    <property type="interactions" value="937"/>
</dbReference>
<dbReference type="IntAct" id="Q66GP0">
    <property type="interactions" value="1"/>
</dbReference>
<dbReference type="STRING" id="3702.Q66GP0"/>
<dbReference type="iPTMnet" id="Q66GP0"/>
<dbReference type="PaxDb" id="3702-AT5G67385.1"/>
<dbReference type="ProteomicsDB" id="226764"/>
<dbReference type="EnsemblPlants" id="AT5G67385.1">
    <property type="protein sequence ID" value="AT5G67385.1"/>
    <property type="gene ID" value="AT5G67385"/>
</dbReference>
<dbReference type="GeneID" id="836874"/>
<dbReference type="Gramene" id="AT5G67385.1">
    <property type="protein sequence ID" value="AT5G67385.1"/>
    <property type="gene ID" value="AT5G67385"/>
</dbReference>
<dbReference type="KEGG" id="ath:AT5G67385"/>
<dbReference type="Araport" id="AT5G67385"/>
<dbReference type="TAIR" id="AT5G67385">
    <property type="gene designation" value="NCH1"/>
</dbReference>
<dbReference type="eggNOG" id="ENOG502QUFV">
    <property type="taxonomic scope" value="Eukaryota"/>
</dbReference>
<dbReference type="HOGENOM" id="CLU_005994_6_0_1"/>
<dbReference type="InParanoid" id="Q66GP0"/>
<dbReference type="OMA" id="CKESQFS"/>
<dbReference type="OrthoDB" id="624345at2759"/>
<dbReference type="UniPathway" id="UPA00143"/>
<dbReference type="PRO" id="PR:Q66GP0"/>
<dbReference type="Proteomes" id="UP000006548">
    <property type="component" value="Chromosome 5"/>
</dbReference>
<dbReference type="ExpressionAtlas" id="Q66GP0">
    <property type="expression patterns" value="baseline and differential"/>
</dbReference>
<dbReference type="GO" id="GO:0005886">
    <property type="term" value="C:plasma membrane"/>
    <property type="evidence" value="ECO:0000314"/>
    <property type="project" value="TAIR"/>
</dbReference>
<dbReference type="GO" id="GO:0009904">
    <property type="term" value="P:chloroplast accumulation movement"/>
    <property type="evidence" value="ECO:0000315"/>
    <property type="project" value="TAIR"/>
</dbReference>
<dbReference type="GO" id="GO:0042742">
    <property type="term" value="P:defense response to bacterium"/>
    <property type="evidence" value="ECO:0000315"/>
    <property type="project" value="UniProtKB"/>
</dbReference>
<dbReference type="GO" id="GO:0016567">
    <property type="term" value="P:protein ubiquitination"/>
    <property type="evidence" value="ECO:0007669"/>
    <property type="project" value="UniProtKB-UniPathway"/>
</dbReference>
<dbReference type="FunFam" id="3.30.710.10:FF:000210">
    <property type="entry name" value="BTB/POZ domain-containing protein SR1IP1"/>
    <property type="match status" value="1"/>
</dbReference>
<dbReference type="Gene3D" id="3.30.710.10">
    <property type="entry name" value="Potassium Channel Kv1.1, Chain A"/>
    <property type="match status" value="1"/>
</dbReference>
<dbReference type="InterPro" id="IPR000210">
    <property type="entry name" value="BTB/POZ_dom"/>
</dbReference>
<dbReference type="InterPro" id="IPR043454">
    <property type="entry name" value="NPH3/RPT2-like"/>
</dbReference>
<dbReference type="InterPro" id="IPR027356">
    <property type="entry name" value="NPH3_dom"/>
</dbReference>
<dbReference type="InterPro" id="IPR011333">
    <property type="entry name" value="SKP1/BTB/POZ_sf"/>
</dbReference>
<dbReference type="PANTHER" id="PTHR32370">
    <property type="entry name" value="OS12G0117600 PROTEIN"/>
    <property type="match status" value="1"/>
</dbReference>
<dbReference type="Pfam" id="PF00651">
    <property type="entry name" value="BTB"/>
    <property type="match status" value="1"/>
</dbReference>
<dbReference type="Pfam" id="PF03000">
    <property type="entry name" value="NPH3"/>
    <property type="match status" value="1"/>
</dbReference>
<dbReference type="SMART" id="SM00225">
    <property type="entry name" value="BTB"/>
    <property type="match status" value="1"/>
</dbReference>
<dbReference type="SUPFAM" id="SSF54695">
    <property type="entry name" value="POZ domain"/>
    <property type="match status" value="1"/>
</dbReference>
<dbReference type="PROSITE" id="PS50097">
    <property type="entry name" value="BTB"/>
    <property type="match status" value="1"/>
</dbReference>
<dbReference type="PROSITE" id="PS51649">
    <property type="entry name" value="NPH3"/>
    <property type="match status" value="1"/>
</dbReference>
<feature type="chain" id="PRO_0000409588" description="BTB/POZ domain-containing protein SR1IP1">
    <location>
        <begin position="1"/>
        <end position="604"/>
    </location>
</feature>
<feature type="domain" description="BTB" evidence="3">
    <location>
        <begin position="27"/>
        <end position="96"/>
    </location>
</feature>
<feature type="domain" description="NPH3" evidence="4">
    <location>
        <begin position="201"/>
        <end position="474"/>
    </location>
</feature>
<feature type="region of interest" description="Disordered" evidence="5">
    <location>
        <begin position="478"/>
        <end position="499"/>
    </location>
</feature>
<feature type="region of interest" description="Disordered" evidence="5">
    <location>
        <begin position="532"/>
        <end position="604"/>
    </location>
</feature>
<feature type="coiled-coil region" evidence="2">
    <location>
        <begin position="500"/>
        <end position="541"/>
    </location>
</feature>
<feature type="compositionally biased region" description="Low complexity" evidence="5">
    <location>
        <begin position="541"/>
        <end position="558"/>
    </location>
</feature>
<feature type="compositionally biased region" description="Basic residues" evidence="5">
    <location>
        <begin position="591"/>
        <end position="604"/>
    </location>
</feature>
<feature type="modified residue" description="Phosphotyrosine" evidence="1">
    <location>
        <position position="415"/>
    </location>
</feature>
<feature type="sequence conflict" description="In Ref. 3; AAU05485/AAU95431." evidence="9" ref="3">
    <original>L</original>
    <variation>S</variation>
    <location>
        <position position="247"/>
    </location>
</feature>
<feature type="sequence conflict" description="In Ref. 4; BX829802." evidence="9" ref="4">
    <original>D</original>
    <variation>N</variation>
    <location>
        <position position="441"/>
    </location>
</feature>
<accession>Q66GP0</accession>
<accession>F4K3Q2</accession>
<organism>
    <name type="scientific">Arabidopsis thaliana</name>
    <name type="common">Mouse-ear cress</name>
    <dbReference type="NCBI Taxonomy" id="3702"/>
    <lineage>
        <taxon>Eukaryota</taxon>
        <taxon>Viridiplantae</taxon>
        <taxon>Streptophyta</taxon>
        <taxon>Embryophyta</taxon>
        <taxon>Tracheophyta</taxon>
        <taxon>Spermatophyta</taxon>
        <taxon>Magnoliopsida</taxon>
        <taxon>eudicotyledons</taxon>
        <taxon>Gunneridae</taxon>
        <taxon>Pentapetalae</taxon>
        <taxon>rosids</taxon>
        <taxon>malvids</taxon>
        <taxon>Brassicales</taxon>
        <taxon>Brassicaceae</taxon>
        <taxon>Camelineae</taxon>
        <taxon>Arabidopsis</taxon>
    </lineage>
</organism>
<evidence type="ECO:0000250" key="1">
    <source>
        <dbReference type="UniProtKB" id="Q9FMF5"/>
    </source>
</evidence>
<evidence type="ECO:0000255" key="2"/>
<evidence type="ECO:0000255" key="3">
    <source>
        <dbReference type="PROSITE-ProRule" id="PRU00037"/>
    </source>
</evidence>
<evidence type="ECO:0000255" key="4">
    <source>
        <dbReference type="PROSITE-ProRule" id="PRU00982"/>
    </source>
</evidence>
<evidence type="ECO:0000256" key="5">
    <source>
        <dbReference type="SAM" id="MobiDB-lite"/>
    </source>
</evidence>
<evidence type="ECO:0000269" key="6">
    <source>
    </source>
</evidence>
<evidence type="ECO:0000269" key="7">
    <source>
    </source>
</evidence>
<evidence type="ECO:0000303" key="8">
    <source>
    </source>
</evidence>
<evidence type="ECO:0000305" key="9"/>
<evidence type="ECO:0000305" key="10">
    <source>
    </source>
</evidence>
<evidence type="ECO:0000312" key="11">
    <source>
        <dbReference type="EMBL" id="AB007645"/>
    </source>
</evidence>
<evidence type="ECO:0000312" key="12">
    <source>
        <dbReference type="EMBL" id="AED98336.1"/>
    </source>
</evidence>